<accession>Q18LF9</accession>
<feature type="chain" id="PRO_0000408151" description="Major DNA-binding protein">
    <location>
        <begin position="1"/>
        <end position="1143"/>
    </location>
</feature>
<feature type="region of interest" description="Required for nuclear localization" evidence="1">
    <location>
        <begin position="1140"/>
        <end position="1143"/>
    </location>
</feature>
<protein>
    <recommendedName>
        <fullName evidence="1">Major DNA-binding protein</fullName>
    </recommendedName>
</protein>
<keyword id="KW-0235">DNA replication</keyword>
<keyword id="KW-0238">DNA-binding</keyword>
<keyword id="KW-1048">Host nucleus</keyword>
<proteinExistence type="inferred from homology"/>
<organism>
    <name type="scientific">Elephantid herpesvirus 1 (isolate Asian elephant/Berlin/Kiba/1998)</name>
    <name type="common">EIHV-1</name>
    <name type="synonym">Elephant endotheliotropic herpesvirus</name>
    <dbReference type="NCBI Taxonomy" id="654902"/>
    <lineage>
        <taxon>Viruses</taxon>
        <taxon>Duplodnaviria</taxon>
        <taxon>Heunggongvirae</taxon>
        <taxon>Peploviricota</taxon>
        <taxon>Herviviricetes</taxon>
        <taxon>Herpesvirales</taxon>
        <taxon>Orthoherpesviridae</taxon>
        <taxon>Betaherpesvirinae</taxon>
        <taxon>Proboscivirus</taxon>
        <taxon>Proboscivirus elephantidbeta1</taxon>
        <taxon>Elephantid herpesvirus 1</taxon>
    </lineage>
</organism>
<name>DNBI_ELHVK</name>
<gene>
    <name evidence="1" type="primary">DBP</name>
</gene>
<organismHost>
    <name type="scientific">Elephas maximus</name>
    <name type="common">Indian elephant</name>
    <dbReference type="NCBI Taxonomy" id="9783"/>
</organismHost>
<organismHost>
    <name type="scientific">Loxodonta africana</name>
    <name type="common">African elephant</name>
    <dbReference type="NCBI Taxonomy" id="9785"/>
</organismHost>
<organismHost>
    <name type="scientific">Loxodonta cyclotis</name>
    <name type="common">African forest elephant</name>
    <dbReference type="NCBI Taxonomy" id="99490"/>
</organismHost>
<sequence length="1143" mass="130078">MSSDDNNIASSASSGHGAWIYITEKTPDVLDILNRLVLTSADSDVTIAPLLYDVTVEPGFELTVKCPLMLTDNNVILKLSNFMPCVFIINSTSSEDFRFCEDVVGNVSEICEGAASRYGYTADFTEFNERTETTDSDVCSNVNVPESDYFVYIACTYGYKELLFKGYLIPHWQDLRDISIGNRRGYKIPLLSPFLFTQCKDDTVQLTDQFILDNGFYNPDLTKTLYSYIFRPLAVSLRYLDVTHLISVTLNQYITDTHATAKLCDKKVYTCHGNNKLSTGDRDVLALCDILANEVTVSYLTPFLDSAYDAPSTLDFYSWPIVKDKTHAEILENLDQFLLHMSVHIGTLIFSGNSVLYQNKISKVGGQSDGSNGQSVEGLLKSIYHTTGIQLLYEDGYDDTRSLVRQHTAKPKNLKFNMDHLSFGASFSSHVLTKIVWFLNRSEEYKTTQSVSSTCYLVINSSTGTCTACDGKHCNTCIGALMCRMATRFPNINRQQKKEPCVTTLLTRMFADMTILGSFGKKYNTERDTQQKDGRVSAEPLDKAKYVLNILDYCKRECLIDSDGNDTLKISSKQEFIKIITGLNRTIDDELIKLLSDMRKHSNAKDDLNNSTMSFTLDLNPHAYAFSPLLQFVYMKTLVNILESLAIVVIAEKISSYPMTQSAYSRWVKQHFQSVYSEFKKSIYKKGFLTLSDYKMKNTTTNDTFTDFSHLKRDYKIDNTVRSSIATVNYQCRLWNFHVSSLRDFRIKYKPIPKNKDSPYFQKADKGIQNPVCGPLSFLITRFHKDIFPNVNVSPMTLWQRIYSNTLKNFNVDLGDKHDVETFIKFMFEQTVEYEGSNSIDVRPETILQYIEFRFVNRLLHASGHRGQYIGIVQALCTTLSDTKVDGLPCYLDSSRTFGTVSEYHAYCREYNGTVKVGRTRPYCNTNGMFERRPLVTVPYALEKYTGAAGNASIFQCGQLGYFSGTGIDRNLGMINRTSDYNFMRRKHIFCTPLTDVLFTKISRGAHVFDFDMLKQRIKQLLDEHCGGFDIELAILSEILKHVKEPNYNDLLFITGYQEHIASSLFDKIKVLDELEISSYSIESLQEIFPEKEELNDTEATGSGYDFSFIIPKATDVDEITGLNIQEFTNIEDETPLVKRMRL</sequence>
<dbReference type="EMBL" id="AF322977">
    <property type="protein sequence ID" value="ABG36560.1"/>
    <property type="molecule type" value="Genomic_DNA"/>
</dbReference>
<dbReference type="SMR" id="Q18LF9"/>
<dbReference type="GO" id="GO:0042025">
    <property type="term" value="C:host cell nucleus"/>
    <property type="evidence" value="ECO:0007669"/>
    <property type="project" value="UniProtKB-SubCell"/>
</dbReference>
<dbReference type="GO" id="GO:0003697">
    <property type="term" value="F:single-stranded DNA binding"/>
    <property type="evidence" value="ECO:0007669"/>
    <property type="project" value="InterPro"/>
</dbReference>
<dbReference type="GO" id="GO:0006260">
    <property type="term" value="P:DNA replication"/>
    <property type="evidence" value="ECO:0007669"/>
    <property type="project" value="UniProtKB-KW"/>
</dbReference>
<dbReference type="Gene3D" id="1.20.190.40">
    <property type="entry name" value="Viral ssDNA binding protein, head domain"/>
    <property type="match status" value="1"/>
</dbReference>
<dbReference type="HAMAP" id="MF_04007">
    <property type="entry name" value="HSV_DNBI"/>
    <property type="match status" value="1"/>
</dbReference>
<dbReference type="InterPro" id="IPR035989">
    <property type="entry name" value="DBP_sf"/>
</dbReference>
<dbReference type="InterPro" id="IPR043031">
    <property type="entry name" value="Viral_ssDBP_head"/>
</dbReference>
<dbReference type="InterPro" id="IPR000635">
    <property type="entry name" value="Viral_ssDNA-bd"/>
</dbReference>
<dbReference type="Pfam" id="PF00747">
    <property type="entry name" value="Viral_DNA_bp"/>
    <property type="match status" value="1"/>
</dbReference>
<dbReference type="SUPFAM" id="SSF118208">
    <property type="entry name" value="Viral ssDNA binding protein"/>
    <property type="match status" value="1"/>
</dbReference>
<comment type="function">
    <text evidence="1">Plays several crucial roles in viral infection. Participates in the opening of the viral DNA origin to initiate replication by interacting with the origin-binding protein. May disrupt loops, hairpins and other secondary structures present on ssDNA to reduce and eliminate pausing of viral DNA polymerase at specific sites during elongation. Promotes viral DNA recombination by performing strand-transfer, characterized by the ability to transfer a DNA strand from a linear duplex to a complementary single-stranded DNA circle. Can also catalyze the renaturation of complementary single strands. Additionally, reorganizes the host cell nucleus, leading to the formation of prereplicative sites and replication compartments. This process is driven by the protein which can form double-helical filaments in the absence of DNA.</text>
</comment>
<comment type="subunit">
    <text evidence="1">Homooligomers. Forms double-helical filaments necessary for the formation of replication compartments within the host nucleus. Interacts with the origin-binding protein. Interacts with the helicase primase complex; this interaction stimulates primer synthesis activity of the helicase-primase complex. Interacts with the DNA polymerase. Interacts with the alkaline exonuclease; this interaction increases its nuclease processivity.</text>
</comment>
<comment type="subcellular location">
    <subcellularLocation>
        <location evidence="1">Host nucleus</location>
    </subcellularLocation>
    <text evidence="1">In the absence of DNA replication, found in the nuclear framework-associated structures (prereplicative sites). As viral DNA replication proceeds, it migrates to globular intranuclear structures (replication compartments).</text>
</comment>
<comment type="similarity">
    <text evidence="1">Belongs to the herpesviridae major DNA-binding protein family.</text>
</comment>
<evidence type="ECO:0000255" key="1">
    <source>
        <dbReference type="HAMAP-Rule" id="MF_04007"/>
    </source>
</evidence>
<reference key="1">
    <citation type="journal article" date="2007" name="J. Virol.">
        <title>Identification of novel rodent herpesviruses, including the first gammaherpesvirus of Mus musculus.</title>
        <authorList>
            <person name="Ehlers B."/>
            <person name="Kuchler J."/>
            <person name="Yasmum N."/>
            <person name="Dural G."/>
            <person name="Voigt S."/>
            <person name="Schmidt-Chanasit J."/>
            <person name="Jakel T."/>
            <person name="Matuschka F.R."/>
            <person name="Richter D."/>
            <person name="Essbauer S."/>
            <person name="Hughes D.J."/>
            <person name="Summers C."/>
            <person name="Bennett M."/>
            <person name="Stewart J.P."/>
            <person name="Ulrich R.G."/>
        </authorList>
    </citation>
    <scope>NUCLEOTIDE SEQUENCE [GENOMIC DNA]</scope>
</reference>
<reference key="2">
    <citation type="journal article" date="2001" name="J. Gen. Virol.">
        <title>Genetic and ultrastructural characterization of a European isolate of the fatal endotheliotropic elephant herpesvirus.</title>
        <authorList>
            <person name="Ehlers B."/>
            <person name="Burkhardt S."/>
            <person name="Goltz M."/>
            <person name="Bergmann V."/>
            <person name="Ochs A."/>
            <person name="Weiler H."/>
            <person name="Hentschke J."/>
        </authorList>
    </citation>
    <scope>NUCLEOTIDE SEQUENCE [GENOMIC DNA]</scope>
</reference>